<proteinExistence type="inferred from homology"/>
<gene>
    <name type="primary">hrtA</name>
    <name type="ordered locus">SA2149</name>
</gene>
<evidence type="ECO:0000250" key="1"/>
<evidence type="ECO:0000255" key="2">
    <source>
        <dbReference type="PROSITE-ProRule" id="PRU00434"/>
    </source>
</evidence>
<evidence type="ECO:0000305" key="3"/>
<accession>Q7A3X3</accession>
<dbReference type="EC" id="7.6.2.-"/>
<dbReference type="EMBL" id="BA000018">
    <property type="protein sequence ID" value="BAB43451.1"/>
    <property type="molecule type" value="Genomic_DNA"/>
</dbReference>
<dbReference type="PIR" id="B90036">
    <property type="entry name" value="B90036"/>
</dbReference>
<dbReference type="RefSeq" id="WP_001229920.1">
    <property type="nucleotide sequence ID" value="NC_002745.2"/>
</dbReference>
<dbReference type="SMR" id="Q7A3X3"/>
<dbReference type="TCDB" id="3.A.1.122.4">
    <property type="family name" value="the atp-binding cassette (abc) superfamily"/>
</dbReference>
<dbReference type="EnsemblBacteria" id="BAB43451">
    <property type="protein sequence ID" value="BAB43451"/>
    <property type="gene ID" value="BAB43451"/>
</dbReference>
<dbReference type="KEGG" id="sau:SA2149"/>
<dbReference type="HOGENOM" id="CLU_000604_1_22_9"/>
<dbReference type="GO" id="GO:0005886">
    <property type="term" value="C:plasma membrane"/>
    <property type="evidence" value="ECO:0007669"/>
    <property type="project" value="UniProtKB-SubCell"/>
</dbReference>
<dbReference type="GO" id="GO:0005524">
    <property type="term" value="F:ATP binding"/>
    <property type="evidence" value="ECO:0007669"/>
    <property type="project" value="UniProtKB-KW"/>
</dbReference>
<dbReference type="GO" id="GO:0016887">
    <property type="term" value="F:ATP hydrolysis activity"/>
    <property type="evidence" value="ECO:0007669"/>
    <property type="project" value="InterPro"/>
</dbReference>
<dbReference type="GO" id="GO:0022857">
    <property type="term" value="F:transmembrane transporter activity"/>
    <property type="evidence" value="ECO:0007669"/>
    <property type="project" value="TreeGrafter"/>
</dbReference>
<dbReference type="CDD" id="cd03255">
    <property type="entry name" value="ABC_MJ0796_LolCDE_FtsE"/>
    <property type="match status" value="1"/>
</dbReference>
<dbReference type="FunFam" id="3.40.50.300:FF:000032">
    <property type="entry name" value="Export ABC transporter ATP-binding protein"/>
    <property type="match status" value="1"/>
</dbReference>
<dbReference type="Gene3D" id="3.40.50.300">
    <property type="entry name" value="P-loop containing nucleotide triphosphate hydrolases"/>
    <property type="match status" value="1"/>
</dbReference>
<dbReference type="InterPro" id="IPR003593">
    <property type="entry name" value="AAA+_ATPase"/>
</dbReference>
<dbReference type="InterPro" id="IPR003439">
    <property type="entry name" value="ABC_transporter-like_ATP-bd"/>
</dbReference>
<dbReference type="InterPro" id="IPR015854">
    <property type="entry name" value="ABC_transpr_LolD-like"/>
</dbReference>
<dbReference type="InterPro" id="IPR017911">
    <property type="entry name" value="MacB-like_ATP-bd"/>
</dbReference>
<dbReference type="InterPro" id="IPR027417">
    <property type="entry name" value="P-loop_NTPase"/>
</dbReference>
<dbReference type="PANTHER" id="PTHR24220:SF666">
    <property type="entry name" value="HEMIN IMPORT ATP-BINDING PROTEIN HRTA-RELATED"/>
    <property type="match status" value="1"/>
</dbReference>
<dbReference type="PANTHER" id="PTHR24220">
    <property type="entry name" value="IMPORT ATP-BINDING PROTEIN"/>
    <property type="match status" value="1"/>
</dbReference>
<dbReference type="Pfam" id="PF00005">
    <property type="entry name" value="ABC_tran"/>
    <property type="match status" value="1"/>
</dbReference>
<dbReference type="SMART" id="SM00382">
    <property type="entry name" value="AAA"/>
    <property type="match status" value="1"/>
</dbReference>
<dbReference type="SUPFAM" id="SSF52540">
    <property type="entry name" value="P-loop containing nucleoside triphosphate hydrolases"/>
    <property type="match status" value="1"/>
</dbReference>
<dbReference type="PROSITE" id="PS50893">
    <property type="entry name" value="ABC_TRANSPORTER_2"/>
    <property type="match status" value="1"/>
</dbReference>
<sequence length="221" mass="24625">MALVVKDIVKNFGEGLSETKVLKGINFEVEQGEFVILNGASGSGKTTLLTILGGLLSQTSGTVLYNDAPLFDKQHRPSDLRLEDIGFIFQSSHLVPYLKVIEQLTLVGQEAGMTKQQSSTRAIQLLKNIGLEDRLNVYPHQLSGGEKQRVAIMRAFMNNPKIILADEPTASLDADRATKVVEMIRQQIKEQQMIGIMITHDRRLFEYADRVIELEDGKITD</sequence>
<comment type="function">
    <text evidence="1">Part of the ABC transporter complex hrt involved in hemin import. Responsible for energy coupling to the transport system (By similarity).</text>
</comment>
<comment type="subunit">
    <text evidence="1">The complex is composed of two ATP-binding proteins (HrtA), two transmembrane proteins (HrtB) and a solute-binding protein.</text>
</comment>
<comment type="subcellular location">
    <subcellularLocation>
        <location evidence="3">Cell membrane</location>
        <topology evidence="3">Peripheral membrane protein</topology>
    </subcellularLocation>
</comment>
<comment type="similarity">
    <text evidence="3">Belongs to the ABC transporter superfamily. HrtA family.</text>
</comment>
<name>HRTA_STAAN</name>
<keyword id="KW-0067">ATP-binding</keyword>
<keyword id="KW-1003">Cell membrane</keyword>
<keyword id="KW-0472">Membrane</keyword>
<keyword id="KW-0547">Nucleotide-binding</keyword>
<keyword id="KW-1278">Translocase</keyword>
<keyword id="KW-0813">Transport</keyword>
<protein>
    <recommendedName>
        <fullName>Putative hemin import ATP-binding protein HrtA</fullName>
        <ecNumber>7.6.2.-</ecNumber>
    </recommendedName>
</protein>
<feature type="chain" id="PRO_0000270134" description="Putative hemin import ATP-binding protein HrtA">
    <location>
        <begin position="1"/>
        <end position="221"/>
    </location>
</feature>
<feature type="domain" description="ABC transporter" evidence="2">
    <location>
        <begin position="3"/>
        <end position="221"/>
    </location>
</feature>
<feature type="binding site" evidence="2">
    <location>
        <begin position="39"/>
        <end position="46"/>
    </location>
    <ligand>
        <name>ATP</name>
        <dbReference type="ChEBI" id="CHEBI:30616"/>
    </ligand>
</feature>
<organism>
    <name type="scientific">Staphylococcus aureus (strain N315)</name>
    <dbReference type="NCBI Taxonomy" id="158879"/>
    <lineage>
        <taxon>Bacteria</taxon>
        <taxon>Bacillati</taxon>
        <taxon>Bacillota</taxon>
        <taxon>Bacilli</taxon>
        <taxon>Bacillales</taxon>
        <taxon>Staphylococcaceae</taxon>
        <taxon>Staphylococcus</taxon>
    </lineage>
</organism>
<reference key="1">
    <citation type="journal article" date="2001" name="Lancet">
        <title>Whole genome sequencing of meticillin-resistant Staphylococcus aureus.</title>
        <authorList>
            <person name="Kuroda M."/>
            <person name="Ohta T."/>
            <person name="Uchiyama I."/>
            <person name="Baba T."/>
            <person name="Yuzawa H."/>
            <person name="Kobayashi I."/>
            <person name="Cui L."/>
            <person name="Oguchi A."/>
            <person name="Aoki K."/>
            <person name="Nagai Y."/>
            <person name="Lian J.-Q."/>
            <person name="Ito T."/>
            <person name="Kanamori M."/>
            <person name="Matsumaru H."/>
            <person name="Maruyama A."/>
            <person name="Murakami H."/>
            <person name="Hosoyama A."/>
            <person name="Mizutani-Ui Y."/>
            <person name="Takahashi N.K."/>
            <person name="Sawano T."/>
            <person name="Inoue R."/>
            <person name="Kaito C."/>
            <person name="Sekimizu K."/>
            <person name="Hirakawa H."/>
            <person name="Kuhara S."/>
            <person name="Goto S."/>
            <person name="Yabuzaki J."/>
            <person name="Kanehisa M."/>
            <person name="Yamashita A."/>
            <person name="Oshima K."/>
            <person name="Furuya K."/>
            <person name="Yoshino C."/>
            <person name="Shiba T."/>
            <person name="Hattori M."/>
            <person name="Ogasawara N."/>
            <person name="Hayashi H."/>
            <person name="Hiramatsu K."/>
        </authorList>
    </citation>
    <scope>NUCLEOTIDE SEQUENCE [LARGE SCALE GENOMIC DNA]</scope>
    <source>
        <strain>N315</strain>
    </source>
</reference>